<reference key="1">
    <citation type="journal article" date="2002" name="Eukaryot. Cell">
        <title>Evolutionary analyses of ABC transporters of Dictyostelium discoideum.</title>
        <authorList>
            <person name="Anjard C."/>
            <person name="Loomis W.F."/>
        </authorList>
    </citation>
    <scope>NUCLEOTIDE SEQUENCE [GENOMIC DNA]</scope>
    <scope>NOMENCLATURE</scope>
    <source>
        <strain>AX4</strain>
    </source>
</reference>
<reference key="2">
    <citation type="journal article" date="2005" name="Nature">
        <title>The genome of the social amoeba Dictyostelium discoideum.</title>
        <authorList>
            <person name="Eichinger L."/>
            <person name="Pachebat J.A."/>
            <person name="Gloeckner G."/>
            <person name="Rajandream M.A."/>
            <person name="Sucgang R."/>
            <person name="Berriman M."/>
            <person name="Song J."/>
            <person name="Olsen R."/>
            <person name="Szafranski K."/>
            <person name="Xu Q."/>
            <person name="Tunggal B."/>
            <person name="Kummerfeld S."/>
            <person name="Madera M."/>
            <person name="Konfortov B.A."/>
            <person name="Rivero F."/>
            <person name="Bankier A.T."/>
            <person name="Lehmann R."/>
            <person name="Hamlin N."/>
            <person name="Davies R."/>
            <person name="Gaudet P."/>
            <person name="Fey P."/>
            <person name="Pilcher K."/>
            <person name="Chen G."/>
            <person name="Saunders D."/>
            <person name="Sodergren E.J."/>
            <person name="Davis P."/>
            <person name="Kerhornou A."/>
            <person name="Nie X."/>
            <person name="Hall N."/>
            <person name="Anjard C."/>
            <person name="Hemphill L."/>
            <person name="Bason N."/>
            <person name="Farbrother P."/>
            <person name="Desany B."/>
            <person name="Just E."/>
            <person name="Morio T."/>
            <person name="Rost R."/>
            <person name="Churcher C.M."/>
            <person name="Cooper J."/>
            <person name="Haydock S."/>
            <person name="van Driessche N."/>
            <person name="Cronin A."/>
            <person name="Goodhead I."/>
            <person name="Muzny D.M."/>
            <person name="Mourier T."/>
            <person name="Pain A."/>
            <person name="Lu M."/>
            <person name="Harper D."/>
            <person name="Lindsay R."/>
            <person name="Hauser H."/>
            <person name="James K.D."/>
            <person name="Quiles M."/>
            <person name="Madan Babu M."/>
            <person name="Saito T."/>
            <person name="Buchrieser C."/>
            <person name="Wardroper A."/>
            <person name="Felder M."/>
            <person name="Thangavelu M."/>
            <person name="Johnson D."/>
            <person name="Knights A."/>
            <person name="Loulseged H."/>
            <person name="Mungall K.L."/>
            <person name="Oliver K."/>
            <person name="Price C."/>
            <person name="Quail M.A."/>
            <person name="Urushihara H."/>
            <person name="Hernandez J."/>
            <person name="Rabbinowitsch E."/>
            <person name="Steffen D."/>
            <person name="Sanders M."/>
            <person name="Ma J."/>
            <person name="Kohara Y."/>
            <person name="Sharp S."/>
            <person name="Simmonds M.N."/>
            <person name="Spiegler S."/>
            <person name="Tivey A."/>
            <person name="Sugano S."/>
            <person name="White B."/>
            <person name="Walker D."/>
            <person name="Woodward J.R."/>
            <person name="Winckler T."/>
            <person name="Tanaka Y."/>
            <person name="Shaulsky G."/>
            <person name="Schleicher M."/>
            <person name="Weinstock G.M."/>
            <person name="Rosenthal A."/>
            <person name="Cox E.C."/>
            <person name="Chisholm R.L."/>
            <person name="Gibbs R.A."/>
            <person name="Loomis W.F."/>
            <person name="Platzer M."/>
            <person name="Kay R.R."/>
            <person name="Williams J.G."/>
            <person name="Dear P.H."/>
            <person name="Noegel A.A."/>
            <person name="Barrell B.G."/>
            <person name="Kuspa A."/>
        </authorList>
    </citation>
    <scope>NUCLEOTIDE SEQUENCE [LARGE SCALE GENOMIC DNA]</scope>
    <source>
        <strain>AX4</strain>
    </source>
</reference>
<dbReference type="EMBL" id="AF482961">
    <property type="protein sequence ID" value="AAL96259.1"/>
    <property type="molecule type" value="Genomic_DNA"/>
</dbReference>
<dbReference type="EMBL" id="AAFI02000003">
    <property type="protein sequence ID" value="EAL73166.1"/>
    <property type="molecule type" value="Genomic_DNA"/>
</dbReference>
<dbReference type="RefSeq" id="XP_647545.1">
    <property type="nucleotide sequence ID" value="XM_642453.1"/>
</dbReference>
<dbReference type="SMR" id="Q8T664"/>
<dbReference type="FunCoup" id="Q8T664">
    <property type="interactions" value="2"/>
</dbReference>
<dbReference type="STRING" id="44689.Q8T664"/>
<dbReference type="PaxDb" id="44689-DDB0191241"/>
<dbReference type="EnsemblProtists" id="EAL73166">
    <property type="protein sequence ID" value="EAL73166"/>
    <property type="gene ID" value="DDB_G0267428"/>
</dbReference>
<dbReference type="GeneID" id="8616352"/>
<dbReference type="KEGG" id="ddi:DDB_G0267428"/>
<dbReference type="dictyBase" id="DDB_G0267428">
    <property type="gene designation" value="abcH2"/>
</dbReference>
<dbReference type="VEuPathDB" id="AmoebaDB:DDB_G0267428"/>
<dbReference type="eggNOG" id="KOG0055">
    <property type="taxonomic scope" value="Eukaryota"/>
</dbReference>
<dbReference type="HOGENOM" id="CLU_531496_0_0_1"/>
<dbReference type="InParanoid" id="Q8T664"/>
<dbReference type="OMA" id="EMPMILL"/>
<dbReference type="PhylomeDB" id="Q8T664"/>
<dbReference type="PRO" id="PR:Q8T664"/>
<dbReference type="Proteomes" id="UP000002195">
    <property type="component" value="Chromosome 1"/>
</dbReference>
<dbReference type="GO" id="GO:0043190">
    <property type="term" value="C:ATP-binding cassette (ABC) transporter complex"/>
    <property type="evidence" value="ECO:0000317"/>
    <property type="project" value="dictyBase"/>
</dbReference>
<dbReference type="GO" id="GO:0005886">
    <property type="term" value="C:plasma membrane"/>
    <property type="evidence" value="ECO:0000318"/>
    <property type="project" value="GO_Central"/>
</dbReference>
<dbReference type="GO" id="GO:0005524">
    <property type="term" value="F:ATP binding"/>
    <property type="evidence" value="ECO:0000317"/>
    <property type="project" value="dictyBase"/>
</dbReference>
<dbReference type="GO" id="GO:0016887">
    <property type="term" value="F:ATP hydrolysis activity"/>
    <property type="evidence" value="ECO:0007669"/>
    <property type="project" value="InterPro"/>
</dbReference>
<dbReference type="GO" id="GO:0042626">
    <property type="term" value="F:ATPase-coupled transmembrane transporter activity"/>
    <property type="evidence" value="ECO:0000317"/>
    <property type="project" value="dictyBase"/>
</dbReference>
<dbReference type="GO" id="GO:0022857">
    <property type="term" value="F:transmembrane transporter activity"/>
    <property type="evidence" value="ECO:0000318"/>
    <property type="project" value="GO_Central"/>
</dbReference>
<dbReference type="GO" id="GO:0031288">
    <property type="term" value="P:sorocarp morphogenesis"/>
    <property type="evidence" value="ECO:0000315"/>
    <property type="project" value="dictyBase"/>
</dbReference>
<dbReference type="GO" id="GO:0055085">
    <property type="term" value="P:transmembrane transport"/>
    <property type="evidence" value="ECO:0000318"/>
    <property type="project" value="GO_Central"/>
</dbReference>
<dbReference type="CDD" id="cd03255">
    <property type="entry name" value="ABC_MJ0796_LolCDE_FtsE"/>
    <property type="match status" value="1"/>
</dbReference>
<dbReference type="FunFam" id="3.40.50.300:FF:001871">
    <property type="entry name" value="ATP-binding cassette, putative"/>
    <property type="match status" value="1"/>
</dbReference>
<dbReference type="Gene3D" id="3.40.50.300">
    <property type="entry name" value="P-loop containing nucleotide triphosphate hydrolases"/>
    <property type="match status" value="1"/>
</dbReference>
<dbReference type="InterPro" id="IPR003593">
    <property type="entry name" value="AAA+_ATPase"/>
</dbReference>
<dbReference type="InterPro" id="IPR003439">
    <property type="entry name" value="ABC_transporter-like_ATP-bd"/>
</dbReference>
<dbReference type="InterPro" id="IPR017871">
    <property type="entry name" value="ABC_transporter-like_CS"/>
</dbReference>
<dbReference type="InterPro" id="IPR015854">
    <property type="entry name" value="ABC_transpr_LolD-like"/>
</dbReference>
<dbReference type="InterPro" id="IPR017911">
    <property type="entry name" value="MacB-like_ATP-bd"/>
</dbReference>
<dbReference type="InterPro" id="IPR027417">
    <property type="entry name" value="P-loop_NTPase"/>
</dbReference>
<dbReference type="PANTHER" id="PTHR24220:SF688">
    <property type="entry name" value="ABC TRANSPORTER H FAMILY MEMBER 2"/>
    <property type="match status" value="1"/>
</dbReference>
<dbReference type="PANTHER" id="PTHR24220">
    <property type="entry name" value="IMPORT ATP-BINDING PROTEIN"/>
    <property type="match status" value="1"/>
</dbReference>
<dbReference type="Pfam" id="PF00005">
    <property type="entry name" value="ABC_tran"/>
    <property type="match status" value="1"/>
</dbReference>
<dbReference type="SMART" id="SM00382">
    <property type="entry name" value="AAA"/>
    <property type="match status" value="1"/>
</dbReference>
<dbReference type="SUPFAM" id="SSF52540">
    <property type="entry name" value="P-loop containing nucleoside triphosphate hydrolases"/>
    <property type="match status" value="1"/>
</dbReference>
<dbReference type="PROSITE" id="PS00211">
    <property type="entry name" value="ABC_TRANSPORTER_1"/>
    <property type="match status" value="1"/>
</dbReference>
<dbReference type="PROSITE" id="PS50893">
    <property type="entry name" value="ABC_TRANSPORTER_2"/>
    <property type="match status" value="1"/>
</dbReference>
<gene>
    <name type="primary">abcH2</name>
    <name type="ORF">DDB_G0267428</name>
</gene>
<feature type="chain" id="PRO_0000346861" description="ABC transporter H family member 2">
    <location>
        <begin position="1"/>
        <end position="513"/>
    </location>
</feature>
<feature type="domain" description="ABC transporter" evidence="1">
    <location>
        <begin position="39"/>
        <end position="280"/>
    </location>
</feature>
<feature type="region of interest" description="Disordered" evidence="2">
    <location>
        <begin position="291"/>
        <end position="471"/>
    </location>
</feature>
<feature type="compositionally biased region" description="Low complexity" evidence="2">
    <location>
        <begin position="324"/>
        <end position="360"/>
    </location>
</feature>
<feature type="compositionally biased region" description="Polar residues" evidence="2">
    <location>
        <begin position="361"/>
        <end position="386"/>
    </location>
</feature>
<feature type="compositionally biased region" description="Low complexity" evidence="2">
    <location>
        <begin position="387"/>
        <end position="471"/>
    </location>
</feature>
<feature type="binding site" evidence="1">
    <location>
        <begin position="75"/>
        <end position="82"/>
    </location>
    <ligand>
        <name>ATP</name>
        <dbReference type="ChEBI" id="CHEBI:30616"/>
    </ligand>
</feature>
<organism>
    <name type="scientific">Dictyostelium discoideum</name>
    <name type="common">Social amoeba</name>
    <dbReference type="NCBI Taxonomy" id="44689"/>
    <lineage>
        <taxon>Eukaryota</taxon>
        <taxon>Amoebozoa</taxon>
        <taxon>Evosea</taxon>
        <taxon>Eumycetozoa</taxon>
        <taxon>Dictyostelia</taxon>
        <taxon>Dictyosteliales</taxon>
        <taxon>Dictyosteliaceae</taxon>
        <taxon>Dictyostelium</taxon>
    </lineage>
</organism>
<keyword id="KW-0067">ATP-binding</keyword>
<keyword id="KW-0547">Nucleotide-binding</keyword>
<keyword id="KW-1185">Reference proteome</keyword>
<keyword id="KW-0813">Transport</keyword>
<proteinExistence type="inferred from homology"/>
<protein>
    <recommendedName>
        <fullName>ABC transporter H family member 2</fullName>
    </recommendedName>
</protein>
<sequence>MAQVFPDVIEEKIQDDDKFFGQTRLKNDDIDFNDPDNVLTMKNIHKTYLLGIEGVPALRGVSMAIKRGEFICIFGTSGGGKTTMLNIIGTIDKPTKGEMKLCGKTINHKTTDKDLAFLRLRNIGFVFQTFNLLSSLTALENVEMPMILLGELSASERRERAISLLTKVGMKDRLDHFPSQLSGGEQQRVTIARAIANNPDVLLLDEPTGDLDTVNTSVIMKLLTDLNKQENITLIMVTHDVGLKMYSDRIIWMRDGKIQRIETVQEQSKREHYQKLYKECELINQNQKNGVTSVFKNDDDNKNIKKQGTLTEFRRPTDYKSIASYNNNNSNLNNNSNSNSNNNSNNNNSKNYASSSSSSSVLNGKLSQSTVNNSSIYNHNNDSPFFNSNNNNNINNNINNNNNNNNNNNNNNNNNNNNNNNNNNNNNNSNSNNNNSNSNNNNNNTKSNNNNNNNIFDIASSSSSYSNNNNNSKNNSLIDDIYLDINEGSSSNFSNNDNFKSVDQITNDLSRIL</sequence>
<evidence type="ECO:0000255" key="1">
    <source>
        <dbReference type="PROSITE-ProRule" id="PRU00434"/>
    </source>
</evidence>
<evidence type="ECO:0000256" key="2">
    <source>
        <dbReference type="SAM" id="MobiDB-lite"/>
    </source>
</evidence>
<evidence type="ECO:0000305" key="3"/>
<comment type="similarity">
    <text evidence="3">Belongs to the ABC transporter superfamily.</text>
</comment>
<accession>Q8T664</accession>
<accession>Q55FI8</accession>
<name>ABCH2_DICDI</name>